<keyword id="KW-0002">3D-structure</keyword>
<keyword id="KW-0235">DNA replication</keyword>
<keyword id="KW-0614">Plasmid</keyword>
<dbReference type="EMBL" id="J03323">
    <property type="protein sequence ID" value="AAA26669.1"/>
    <property type="molecule type" value="Genomic_DNA"/>
</dbReference>
<dbReference type="PIR" id="A37389">
    <property type="entry name" value="A37389"/>
</dbReference>
<dbReference type="RefSeq" id="WP_017431565.1">
    <property type="nucleotide sequence ID" value="NZ_SDOB01000031.1"/>
</dbReference>
<dbReference type="PDB" id="4CWE">
    <property type="method" value="X-ray"/>
    <property type="resolution" value="3.00 A"/>
    <property type="chains" value="A/C=220-314"/>
</dbReference>
<dbReference type="PDBsum" id="4CWE"/>
<dbReference type="SMR" id="P19529"/>
<dbReference type="EvolutionaryTrace" id="P19529"/>
<dbReference type="GO" id="GO:0006260">
    <property type="term" value="P:DNA replication"/>
    <property type="evidence" value="ECO:0007669"/>
    <property type="project" value="UniProtKB-KW"/>
</dbReference>
<dbReference type="InterPro" id="IPR003491">
    <property type="entry name" value="REP-like_C"/>
</dbReference>
<dbReference type="InterPro" id="IPR054456">
    <property type="entry name" value="RepD-like_N"/>
</dbReference>
<dbReference type="Pfam" id="PF02486">
    <property type="entry name" value="Rep_trans"/>
    <property type="match status" value="1"/>
</dbReference>
<dbReference type="Pfam" id="PF22477">
    <property type="entry name" value="RepD-like_N"/>
    <property type="match status" value="1"/>
</dbReference>
<reference key="1">
    <citation type="journal article" date="1990" name="Plasmid">
        <title>Nucleotide sequence of the rep gene of staphylococcal plasmid pCW7.</title>
        <authorList>
            <person name="Balson D.F."/>
            <person name="Shaw W.V."/>
        </authorList>
    </citation>
    <scope>NUCLEOTIDE SEQUENCE [GENOMIC DNA]</scope>
</reference>
<name>REPN_STAAU</name>
<evidence type="ECO:0000256" key="1">
    <source>
        <dbReference type="SAM" id="MobiDB-lite"/>
    </source>
</evidence>
<evidence type="ECO:0000305" key="2"/>
<evidence type="ECO:0007829" key="3">
    <source>
        <dbReference type="PDB" id="4CWE"/>
    </source>
</evidence>
<comment type="function">
    <text>This protein is probably a specific topoisomerase involved in initiating replication. This protein is specifically required and may be rate-limiting for replication of the plasmid in vivo.</text>
</comment>
<comment type="miscellaneous">
    <text>The nicking site of REP proteins is sequence, but not plasmid, specific.</text>
</comment>
<comment type="similarity">
    <text evidence="2">Belongs to the plasmid replication initiation factor family.</text>
</comment>
<organism>
    <name type="scientific">Staphylococcus aureus</name>
    <dbReference type="NCBI Taxonomy" id="1280"/>
    <lineage>
        <taxon>Bacteria</taxon>
        <taxon>Bacillati</taxon>
        <taxon>Bacillota</taxon>
        <taxon>Bacilli</taxon>
        <taxon>Bacillales</taxon>
        <taxon>Staphylococcaceae</taxon>
        <taxon>Staphylococcus</taxon>
    </lineage>
</organism>
<feature type="chain" id="PRO_0000068326" description="Replication initiation protein">
    <location>
        <begin position="1"/>
        <end position="314"/>
    </location>
</feature>
<feature type="region of interest" description="Disordered" evidence="1">
    <location>
        <begin position="1"/>
        <end position="25"/>
    </location>
</feature>
<feature type="compositionally biased region" description="Polar residues" evidence="1">
    <location>
        <begin position="1"/>
        <end position="10"/>
    </location>
</feature>
<feature type="compositionally biased region" description="Basic and acidic residues" evidence="1">
    <location>
        <begin position="11"/>
        <end position="20"/>
    </location>
</feature>
<feature type="strand" evidence="3">
    <location>
        <begin position="230"/>
        <end position="235"/>
    </location>
</feature>
<feature type="helix" evidence="3">
    <location>
        <begin position="239"/>
        <end position="241"/>
    </location>
</feature>
<feature type="helix" evidence="3">
    <location>
        <begin position="245"/>
        <end position="256"/>
    </location>
</feature>
<feature type="helix" evidence="3">
    <location>
        <begin position="258"/>
        <end position="263"/>
    </location>
</feature>
<feature type="helix" evidence="3">
    <location>
        <begin position="266"/>
        <end position="279"/>
    </location>
</feature>
<feature type="helix" evidence="3">
    <location>
        <begin position="285"/>
        <end position="307"/>
    </location>
</feature>
<sequence>MSKNNHANHSNHLENHDLDNFSKTGYSNSRLNRHTMYTPEPKLSFDAMTIVGNLNKNNAHKLSEFMSVEPQIRLWDILQTKFKAKALQEKVYIEYDKVKADTWDRRNMRVEFNPNKLTHEEMLWLKQNIIDYMEDDGFTRLDLAFDFEYDLSDYYAMTDKSVKKTIFYGRNGKPETKYFGVRDSDRFIRIYNKKQERKDNADIKIMSEHLWRVEIELKRDMVDYWNDCFNDLHILQPDWKTIERTSDRAMVFMLLNDEEEWGKLERRTKNKYKKLIKEISLIDLTDLMKSTLKANEKQLQKQIDFWQREFRFWK</sequence>
<proteinExistence type="evidence at protein level"/>
<accession>P19529</accession>
<protein>
    <recommendedName>
        <fullName>Replication initiation protein</fullName>
    </recommendedName>
</protein>
<geneLocation type="plasmid">
    <name>pCW7</name>
</geneLocation>
<gene>
    <name type="primary">repN</name>
</gene>